<accession>A9IFP1</accession>
<organism>
    <name type="scientific">Bordetella petrii (strain ATCC BAA-461 / DSM 12804 / CCUG 43448)</name>
    <dbReference type="NCBI Taxonomy" id="340100"/>
    <lineage>
        <taxon>Bacteria</taxon>
        <taxon>Pseudomonadati</taxon>
        <taxon>Pseudomonadota</taxon>
        <taxon>Betaproteobacteria</taxon>
        <taxon>Burkholderiales</taxon>
        <taxon>Alcaligenaceae</taxon>
        <taxon>Bordetella</taxon>
    </lineage>
</organism>
<evidence type="ECO:0000255" key="1">
    <source>
        <dbReference type="HAMAP-Rule" id="MF_01865"/>
    </source>
</evidence>
<evidence type="ECO:0000255" key="2">
    <source>
        <dbReference type="PROSITE-ProRule" id="PRU01266"/>
    </source>
</evidence>
<dbReference type="EC" id="2.8.4.4" evidence="1"/>
<dbReference type="EMBL" id="AM902716">
    <property type="protein sequence ID" value="CAP45073.1"/>
    <property type="molecule type" value="Genomic_DNA"/>
</dbReference>
<dbReference type="SMR" id="A9IFP1"/>
<dbReference type="STRING" id="94624.Bpet4721"/>
<dbReference type="KEGG" id="bpt:Bpet4721"/>
<dbReference type="eggNOG" id="COG0621">
    <property type="taxonomic scope" value="Bacteria"/>
</dbReference>
<dbReference type="Proteomes" id="UP000001225">
    <property type="component" value="Chromosome"/>
</dbReference>
<dbReference type="GO" id="GO:0005829">
    <property type="term" value="C:cytosol"/>
    <property type="evidence" value="ECO:0007669"/>
    <property type="project" value="TreeGrafter"/>
</dbReference>
<dbReference type="GO" id="GO:0051539">
    <property type="term" value="F:4 iron, 4 sulfur cluster binding"/>
    <property type="evidence" value="ECO:0007669"/>
    <property type="project" value="UniProtKB-UniRule"/>
</dbReference>
<dbReference type="GO" id="GO:0035599">
    <property type="term" value="F:aspartic acid methylthiotransferase activity"/>
    <property type="evidence" value="ECO:0007669"/>
    <property type="project" value="TreeGrafter"/>
</dbReference>
<dbReference type="GO" id="GO:0046872">
    <property type="term" value="F:metal ion binding"/>
    <property type="evidence" value="ECO:0007669"/>
    <property type="project" value="UniProtKB-KW"/>
</dbReference>
<dbReference type="GO" id="GO:0103039">
    <property type="term" value="F:protein methylthiotransferase activity"/>
    <property type="evidence" value="ECO:0007669"/>
    <property type="project" value="UniProtKB-EC"/>
</dbReference>
<dbReference type="GO" id="GO:0006400">
    <property type="term" value="P:tRNA modification"/>
    <property type="evidence" value="ECO:0007669"/>
    <property type="project" value="InterPro"/>
</dbReference>
<dbReference type="CDD" id="cd01335">
    <property type="entry name" value="Radical_SAM"/>
    <property type="match status" value="1"/>
</dbReference>
<dbReference type="FunFam" id="2.40.50.140:FF:000060">
    <property type="entry name" value="Ribosomal protein S12 methylthiotransferase RimO"/>
    <property type="match status" value="1"/>
</dbReference>
<dbReference type="FunFam" id="3.40.50.12160:FF:000002">
    <property type="entry name" value="Ribosomal protein S12 methylthiotransferase RimO"/>
    <property type="match status" value="1"/>
</dbReference>
<dbReference type="FunFam" id="3.80.30.20:FF:000001">
    <property type="entry name" value="tRNA-2-methylthio-N(6)-dimethylallyladenosine synthase 2"/>
    <property type="match status" value="1"/>
</dbReference>
<dbReference type="Gene3D" id="3.40.50.12160">
    <property type="entry name" value="Methylthiotransferase, N-terminal domain"/>
    <property type="match status" value="1"/>
</dbReference>
<dbReference type="Gene3D" id="2.40.50.140">
    <property type="entry name" value="Nucleic acid-binding proteins"/>
    <property type="match status" value="1"/>
</dbReference>
<dbReference type="Gene3D" id="3.80.30.20">
    <property type="entry name" value="tm_1862 like domain"/>
    <property type="match status" value="1"/>
</dbReference>
<dbReference type="HAMAP" id="MF_01865">
    <property type="entry name" value="MTTase_RimO"/>
    <property type="match status" value="1"/>
</dbReference>
<dbReference type="InterPro" id="IPR006638">
    <property type="entry name" value="Elp3/MiaA/NifB-like_rSAM"/>
</dbReference>
<dbReference type="InterPro" id="IPR005839">
    <property type="entry name" value="Methylthiotransferase"/>
</dbReference>
<dbReference type="InterPro" id="IPR020612">
    <property type="entry name" value="Methylthiotransferase_CS"/>
</dbReference>
<dbReference type="InterPro" id="IPR013848">
    <property type="entry name" value="Methylthiotransferase_N"/>
</dbReference>
<dbReference type="InterPro" id="IPR038135">
    <property type="entry name" value="Methylthiotransferase_N_sf"/>
</dbReference>
<dbReference type="InterPro" id="IPR012340">
    <property type="entry name" value="NA-bd_OB-fold"/>
</dbReference>
<dbReference type="InterPro" id="IPR005840">
    <property type="entry name" value="Ribosomal_uS12_MeSTrfase_RimO"/>
</dbReference>
<dbReference type="InterPro" id="IPR007197">
    <property type="entry name" value="rSAM"/>
</dbReference>
<dbReference type="InterPro" id="IPR023404">
    <property type="entry name" value="rSAM_horseshoe"/>
</dbReference>
<dbReference type="InterPro" id="IPR002792">
    <property type="entry name" value="TRAM_dom"/>
</dbReference>
<dbReference type="NCBIfam" id="TIGR01125">
    <property type="entry name" value="30S ribosomal protein S12 methylthiotransferase RimO"/>
    <property type="match status" value="1"/>
</dbReference>
<dbReference type="NCBIfam" id="TIGR00089">
    <property type="entry name" value="MiaB/RimO family radical SAM methylthiotransferase"/>
    <property type="match status" value="1"/>
</dbReference>
<dbReference type="PANTHER" id="PTHR43837">
    <property type="entry name" value="RIBOSOMAL PROTEIN S12 METHYLTHIOTRANSFERASE RIMO"/>
    <property type="match status" value="1"/>
</dbReference>
<dbReference type="PANTHER" id="PTHR43837:SF1">
    <property type="entry name" value="RIBOSOMAL PROTEIN US12 METHYLTHIOTRANSFERASE RIMO"/>
    <property type="match status" value="1"/>
</dbReference>
<dbReference type="Pfam" id="PF04055">
    <property type="entry name" value="Radical_SAM"/>
    <property type="match status" value="1"/>
</dbReference>
<dbReference type="Pfam" id="PF18693">
    <property type="entry name" value="TRAM_2"/>
    <property type="match status" value="1"/>
</dbReference>
<dbReference type="Pfam" id="PF00919">
    <property type="entry name" value="UPF0004"/>
    <property type="match status" value="1"/>
</dbReference>
<dbReference type="SFLD" id="SFLDG01082">
    <property type="entry name" value="B12-binding_domain_containing"/>
    <property type="match status" value="1"/>
</dbReference>
<dbReference type="SFLD" id="SFLDG01061">
    <property type="entry name" value="methylthiotransferase"/>
    <property type="match status" value="1"/>
</dbReference>
<dbReference type="SFLD" id="SFLDF00274">
    <property type="entry name" value="ribosomal_protein_S12_methylth"/>
    <property type="match status" value="1"/>
</dbReference>
<dbReference type="SMART" id="SM00729">
    <property type="entry name" value="Elp3"/>
    <property type="match status" value="1"/>
</dbReference>
<dbReference type="SUPFAM" id="SSF102114">
    <property type="entry name" value="Radical SAM enzymes"/>
    <property type="match status" value="1"/>
</dbReference>
<dbReference type="PROSITE" id="PS51449">
    <property type="entry name" value="MTTASE_N"/>
    <property type="match status" value="1"/>
</dbReference>
<dbReference type="PROSITE" id="PS01278">
    <property type="entry name" value="MTTASE_RADICAL"/>
    <property type="match status" value="1"/>
</dbReference>
<dbReference type="PROSITE" id="PS51918">
    <property type="entry name" value="RADICAL_SAM"/>
    <property type="match status" value="1"/>
</dbReference>
<dbReference type="PROSITE" id="PS50926">
    <property type="entry name" value="TRAM"/>
    <property type="match status" value="1"/>
</dbReference>
<sequence length="441" mass="48582">MATSKPASIAMISLGCPKALVDSERILTQLRTEGYQVTPSYDDADVVVVNTCGFIDSAKAESLEAIGEAIAENGKVIVTGCMGVEESVIREIHPSVLAVTGPQQYEQVVLEVHRAAPPKADHNPYVDLVPPQGVKLTPRHYAYLKISEGCNHRCSFCIIPSMRGDLVSRPVGDVLSEAERLVKAGVKELLVISQDTSAYGVDLKYRSGFWNGRPIKTRMTELCAALSELGVWTRLHYVYPYPHVDEVIPLMAQGKVLPYLDIPFQHASPRILKAMKRPAFEDKTLARIKRWREECPDLTLRSTFIVGFPGETEADFQYLLDWMSEAQLDRVGCFQYSPVNGAPANELDGAVPDEVKQERWDRFMAHQQAISAARLQTRVGREIDVLIDEVNADGAVGRSSADAPEIDGCVYVGNAATLRPGDMARVRITAADEYDLHGDAV</sequence>
<reference key="1">
    <citation type="journal article" date="2008" name="BMC Genomics">
        <title>The missing link: Bordetella petrii is endowed with both the metabolic versatility of environmental bacteria and virulence traits of pathogenic Bordetellae.</title>
        <authorList>
            <person name="Gross R."/>
            <person name="Guzman C.A."/>
            <person name="Sebaihia M."/>
            <person name="Martin dos Santos V.A.P."/>
            <person name="Pieper D.H."/>
            <person name="Koebnik R."/>
            <person name="Lechner M."/>
            <person name="Bartels D."/>
            <person name="Buhrmester J."/>
            <person name="Choudhuri J.V."/>
            <person name="Ebensen T."/>
            <person name="Gaigalat L."/>
            <person name="Herrmann S."/>
            <person name="Khachane A.N."/>
            <person name="Larisch C."/>
            <person name="Link S."/>
            <person name="Linke B."/>
            <person name="Meyer F."/>
            <person name="Mormann S."/>
            <person name="Nakunst D."/>
            <person name="Rueckert C."/>
            <person name="Schneiker-Bekel S."/>
            <person name="Schulze K."/>
            <person name="Voerholter F.-J."/>
            <person name="Yevsa T."/>
            <person name="Engle J.T."/>
            <person name="Goldman W.E."/>
            <person name="Puehler A."/>
            <person name="Goebel U.B."/>
            <person name="Goesmann A."/>
            <person name="Bloecker H."/>
            <person name="Kaiser O."/>
            <person name="Martinez-Arias R."/>
        </authorList>
    </citation>
    <scope>NUCLEOTIDE SEQUENCE [LARGE SCALE GENOMIC DNA]</scope>
    <source>
        <strain>ATCC BAA-461 / DSM 12804 / CCUG 43448</strain>
    </source>
</reference>
<name>RIMO_BORPD</name>
<protein>
    <recommendedName>
        <fullName evidence="1">Ribosomal protein uS12 methylthiotransferase RimO</fullName>
        <shortName evidence="1">uS12 MTTase</shortName>
        <shortName evidence="1">uS12 methylthiotransferase</shortName>
        <ecNumber evidence="1">2.8.4.4</ecNumber>
    </recommendedName>
    <alternativeName>
        <fullName evidence="1">Ribosomal protein uS12 (aspartate-C(3))-methylthiotransferase</fullName>
    </alternativeName>
    <alternativeName>
        <fullName evidence="1">Ribosome maturation factor RimO</fullName>
    </alternativeName>
</protein>
<feature type="chain" id="PRO_0000374716" description="Ribosomal protein uS12 methylthiotransferase RimO">
    <location>
        <begin position="1"/>
        <end position="441"/>
    </location>
</feature>
<feature type="domain" description="MTTase N-terminal" evidence="1">
    <location>
        <begin position="7"/>
        <end position="117"/>
    </location>
</feature>
<feature type="domain" description="Radical SAM core" evidence="2">
    <location>
        <begin position="136"/>
        <end position="373"/>
    </location>
</feature>
<feature type="domain" description="TRAM" evidence="1">
    <location>
        <begin position="376"/>
        <end position="441"/>
    </location>
</feature>
<feature type="binding site" evidence="1">
    <location>
        <position position="16"/>
    </location>
    <ligand>
        <name>[4Fe-4S] cluster</name>
        <dbReference type="ChEBI" id="CHEBI:49883"/>
        <label>1</label>
    </ligand>
</feature>
<feature type="binding site" evidence="1">
    <location>
        <position position="52"/>
    </location>
    <ligand>
        <name>[4Fe-4S] cluster</name>
        <dbReference type="ChEBI" id="CHEBI:49883"/>
        <label>1</label>
    </ligand>
</feature>
<feature type="binding site" evidence="1">
    <location>
        <position position="81"/>
    </location>
    <ligand>
        <name>[4Fe-4S] cluster</name>
        <dbReference type="ChEBI" id="CHEBI:49883"/>
        <label>1</label>
    </ligand>
</feature>
<feature type="binding site" evidence="1">
    <location>
        <position position="150"/>
    </location>
    <ligand>
        <name>[4Fe-4S] cluster</name>
        <dbReference type="ChEBI" id="CHEBI:49883"/>
        <label>2</label>
        <note>4Fe-4S-S-AdoMet</note>
    </ligand>
</feature>
<feature type="binding site" evidence="1">
    <location>
        <position position="154"/>
    </location>
    <ligand>
        <name>[4Fe-4S] cluster</name>
        <dbReference type="ChEBI" id="CHEBI:49883"/>
        <label>2</label>
        <note>4Fe-4S-S-AdoMet</note>
    </ligand>
</feature>
<feature type="binding site" evidence="1">
    <location>
        <position position="157"/>
    </location>
    <ligand>
        <name>[4Fe-4S] cluster</name>
        <dbReference type="ChEBI" id="CHEBI:49883"/>
        <label>2</label>
        <note>4Fe-4S-S-AdoMet</note>
    </ligand>
</feature>
<proteinExistence type="inferred from homology"/>
<keyword id="KW-0004">4Fe-4S</keyword>
<keyword id="KW-0963">Cytoplasm</keyword>
<keyword id="KW-0408">Iron</keyword>
<keyword id="KW-0411">Iron-sulfur</keyword>
<keyword id="KW-0479">Metal-binding</keyword>
<keyword id="KW-0949">S-adenosyl-L-methionine</keyword>
<keyword id="KW-0808">Transferase</keyword>
<comment type="function">
    <text evidence="1">Catalyzes the methylthiolation of an aspartic acid residue of ribosomal protein uS12.</text>
</comment>
<comment type="catalytic activity">
    <reaction evidence="1">
        <text>L-aspartate(89)-[ribosomal protein uS12]-hydrogen + (sulfur carrier)-SH + AH2 + 2 S-adenosyl-L-methionine = 3-methylsulfanyl-L-aspartate(89)-[ribosomal protein uS12]-hydrogen + (sulfur carrier)-H + 5'-deoxyadenosine + L-methionine + A + S-adenosyl-L-homocysteine + 2 H(+)</text>
        <dbReference type="Rhea" id="RHEA:37087"/>
        <dbReference type="Rhea" id="RHEA-COMP:10460"/>
        <dbReference type="Rhea" id="RHEA-COMP:10461"/>
        <dbReference type="Rhea" id="RHEA-COMP:14737"/>
        <dbReference type="Rhea" id="RHEA-COMP:14739"/>
        <dbReference type="ChEBI" id="CHEBI:13193"/>
        <dbReference type="ChEBI" id="CHEBI:15378"/>
        <dbReference type="ChEBI" id="CHEBI:17319"/>
        <dbReference type="ChEBI" id="CHEBI:17499"/>
        <dbReference type="ChEBI" id="CHEBI:29917"/>
        <dbReference type="ChEBI" id="CHEBI:29961"/>
        <dbReference type="ChEBI" id="CHEBI:57844"/>
        <dbReference type="ChEBI" id="CHEBI:57856"/>
        <dbReference type="ChEBI" id="CHEBI:59789"/>
        <dbReference type="ChEBI" id="CHEBI:64428"/>
        <dbReference type="ChEBI" id="CHEBI:73599"/>
        <dbReference type="EC" id="2.8.4.4"/>
    </reaction>
</comment>
<comment type="cofactor">
    <cofactor evidence="1">
        <name>[4Fe-4S] cluster</name>
        <dbReference type="ChEBI" id="CHEBI:49883"/>
    </cofactor>
    <text evidence="1">Binds 2 [4Fe-4S] clusters. One cluster is coordinated with 3 cysteines and an exchangeable S-adenosyl-L-methionine.</text>
</comment>
<comment type="subcellular location">
    <subcellularLocation>
        <location evidence="1">Cytoplasm</location>
    </subcellularLocation>
</comment>
<comment type="similarity">
    <text evidence="1">Belongs to the methylthiotransferase family. RimO subfamily.</text>
</comment>
<gene>
    <name evidence="1" type="primary">rimO</name>
    <name type="ordered locus">Bpet4721</name>
</gene>